<proteinExistence type="evidence at protein level"/>
<dbReference type="EMBL" id="AE017282">
    <property type="protein sequence ID" value="AAU93139.1"/>
    <property type="molecule type" value="Genomic_DNA"/>
</dbReference>
<dbReference type="RefSeq" id="WP_010960053.1">
    <property type="nucleotide sequence ID" value="NC_002977.6"/>
</dbReference>
<dbReference type="PDB" id="4XPW">
    <property type="method" value="X-ray"/>
    <property type="resolution" value="1.17 A"/>
    <property type="chains" value="A=1-131"/>
</dbReference>
<dbReference type="PDB" id="4XPX">
    <property type="method" value="X-ray"/>
    <property type="resolution" value="1.03 A"/>
    <property type="chains" value="A=2-131"/>
</dbReference>
<dbReference type="PDB" id="4XPY">
    <property type="method" value="X-ray"/>
    <property type="resolution" value="1.13 A"/>
    <property type="chains" value="A=1-131"/>
</dbReference>
<dbReference type="PDB" id="4XQ1">
    <property type="method" value="X-ray"/>
    <property type="resolution" value="1.40 A"/>
    <property type="chains" value="A=1-131"/>
</dbReference>
<dbReference type="PDBsum" id="4XPW"/>
<dbReference type="PDBsum" id="4XPX"/>
<dbReference type="PDBsum" id="4XPY"/>
<dbReference type="PDBsum" id="4XQ1"/>
<dbReference type="SMR" id="Q60AX2"/>
<dbReference type="STRING" id="243233.MCA0715"/>
<dbReference type="GeneID" id="88223035"/>
<dbReference type="KEGG" id="mca:MCA0715"/>
<dbReference type="eggNOG" id="COG2703">
    <property type="taxonomic scope" value="Bacteria"/>
</dbReference>
<dbReference type="HOGENOM" id="CLU_086902_3_1_6"/>
<dbReference type="EvolutionaryTrace" id="Q60AX2"/>
<dbReference type="Proteomes" id="UP000006821">
    <property type="component" value="Chromosome"/>
</dbReference>
<dbReference type="GO" id="GO:0046872">
    <property type="term" value="F:metal ion binding"/>
    <property type="evidence" value="ECO:0007669"/>
    <property type="project" value="UniProtKB-KW"/>
</dbReference>
<dbReference type="GO" id="GO:0005344">
    <property type="term" value="F:oxygen carrier activity"/>
    <property type="evidence" value="ECO:0007669"/>
    <property type="project" value="UniProtKB-KW"/>
</dbReference>
<dbReference type="CDD" id="cd12107">
    <property type="entry name" value="Hemerythrin"/>
    <property type="match status" value="1"/>
</dbReference>
<dbReference type="Gene3D" id="1.20.120.50">
    <property type="entry name" value="Hemerythrin-like"/>
    <property type="match status" value="1"/>
</dbReference>
<dbReference type="InterPro" id="IPR016131">
    <property type="entry name" value="Haemerythrin_Fe_BS"/>
</dbReference>
<dbReference type="InterPro" id="IPR050669">
    <property type="entry name" value="Hemerythrin"/>
</dbReference>
<dbReference type="InterPro" id="IPR012312">
    <property type="entry name" value="Hemerythrin-like"/>
</dbReference>
<dbReference type="InterPro" id="IPR035938">
    <property type="entry name" value="Hemerythrin-like_sf"/>
</dbReference>
<dbReference type="InterPro" id="IPR012827">
    <property type="entry name" value="Hemerythrin_metal-bd"/>
</dbReference>
<dbReference type="NCBIfam" id="NF033749">
    <property type="entry name" value="bact_hemeryth"/>
    <property type="match status" value="1"/>
</dbReference>
<dbReference type="NCBIfam" id="TIGR02481">
    <property type="entry name" value="hemeryth_dom"/>
    <property type="match status" value="1"/>
</dbReference>
<dbReference type="PANTHER" id="PTHR37164">
    <property type="entry name" value="BACTERIOHEMERYTHRIN"/>
    <property type="match status" value="1"/>
</dbReference>
<dbReference type="PANTHER" id="PTHR37164:SF1">
    <property type="entry name" value="BACTERIOHEMERYTHRIN"/>
    <property type="match status" value="1"/>
</dbReference>
<dbReference type="Pfam" id="PF01814">
    <property type="entry name" value="Hemerythrin"/>
    <property type="match status" value="1"/>
</dbReference>
<dbReference type="SUPFAM" id="SSF47188">
    <property type="entry name" value="Hemerythrin-like"/>
    <property type="match status" value="1"/>
</dbReference>
<dbReference type="PROSITE" id="PS00550">
    <property type="entry name" value="HEMERYTHRINS"/>
    <property type="match status" value="1"/>
</dbReference>
<name>HEMTB_METCA</name>
<evidence type="ECO:0000250" key="1">
    <source>
        <dbReference type="UniProtKB" id="P02244"/>
    </source>
</evidence>
<evidence type="ECO:0000269" key="2">
    <source>
    </source>
</evidence>
<evidence type="ECO:0000269" key="3">
    <source>
    </source>
</evidence>
<evidence type="ECO:0000305" key="4"/>
<evidence type="ECO:0007829" key="5">
    <source>
        <dbReference type="PDB" id="4XPX"/>
    </source>
</evidence>
<comment type="function">
    <text evidence="2">Oxygen-binding protein. May be involved in a storage mechanism or for delivery to oxygen-requiring enzymes. The oxygen-binding site contains two iron atoms.</text>
</comment>
<comment type="subunit">
    <text evidence="2 3">Monomer.</text>
</comment>
<comment type="similarity">
    <text evidence="4">Belongs to the hemerythrin family.</text>
</comment>
<feature type="chain" id="PRO_0000343361" description="Bacteriohemerythrin">
    <location>
        <begin position="1"/>
        <end position="131"/>
    </location>
</feature>
<feature type="binding site" evidence="1">
    <location>
        <position position="22"/>
    </location>
    <ligand>
        <name>Fe cation</name>
        <dbReference type="ChEBI" id="CHEBI:24875"/>
        <label>1</label>
    </ligand>
</feature>
<feature type="binding site" evidence="1">
    <location>
        <position position="58"/>
    </location>
    <ligand>
        <name>Fe cation</name>
        <dbReference type="ChEBI" id="CHEBI:24875"/>
        <label>1</label>
    </ligand>
</feature>
<feature type="binding site" evidence="1">
    <location>
        <position position="62"/>
    </location>
    <ligand>
        <name>Fe cation</name>
        <dbReference type="ChEBI" id="CHEBI:24875"/>
        <label>1</label>
    </ligand>
</feature>
<feature type="binding site" evidence="1">
    <location>
        <position position="62"/>
    </location>
    <ligand>
        <name>Fe cation</name>
        <dbReference type="ChEBI" id="CHEBI:24875"/>
        <label>2</label>
    </ligand>
</feature>
<feature type="binding site" evidence="1">
    <location>
        <position position="77"/>
    </location>
    <ligand>
        <name>Fe cation</name>
        <dbReference type="ChEBI" id="CHEBI:24875"/>
        <label>2</label>
    </ligand>
</feature>
<feature type="binding site" evidence="1">
    <location>
        <position position="81"/>
    </location>
    <ligand>
        <name>Fe cation</name>
        <dbReference type="ChEBI" id="CHEBI:24875"/>
        <label>2</label>
    </ligand>
</feature>
<feature type="binding site" evidence="1">
    <location>
        <position position="117"/>
    </location>
    <ligand>
        <name>Fe cation</name>
        <dbReference type="ChEBI" id="CHEBI:24875"/>
        <label>2</label>
    </ligand>
</feature>
<feature type="binding site" evidence="1">
    <location>
        <position position="122"/>
    </location>
    <ligand>
        <name>Fe cation</name>
        <dbReference type="ChEBI" id="CHEBI:24875"/>
        <label>1</label>
    </ligand>
</feature>
<feature type="binding site" evidence="1">
    <location>
        <position position="122"/>
    </location>
    <ligand>
        <name>Fe cation</name>
        <dbReference type="ChEBI" id="CHEBI:24875"/>
        <label>2</label>
    </ligand>
</feature>
<feature type="helix" evidence="5">
    <location>
        <begin position="8"/>
        <end position="11"/>
    </location>
</feature>
<feature type="helix" evidence="5">
    <location>
        <begin position="16"/>
        <end position="35"/>
    </location>
</feature>
<feature type="helix" evidence="5">
    <location>
        <begin position="41"/>
        <end position="68"/>
    </location>
</feature>
<feature type="helix" evidence="5">
    <location>
        <begin position="74"/>
        <end position="96"/>
    </location>
</feature>
<feature type="helix" evidence="5">
    <location>
        <begin position="104"/>
        <end position="120"/>
    </location>
</feature>
<feature type="helix" evidence="5">
    <location>
        <begin position="122"/>
        <end position="125"/>
    </location>
</feature>
<feature type="helix" evidence="5">
    <location>
        <begin position="126"/>
        <end position="130"/>
    </location>
</feature>
<protein>
    <recommendedName>
        <fullName>Bacteriohemerythrin</fullName>
    </recommendedName>
    <alternativeName>
        <fullName>McHr</fullName>
    </alternativeName>
</protein>
<keyword id="KW-0002">3D-structure</keyword>
<keyword id="KW-0408">Iron</keyword>
<keyword id="KW-0479">Metal-binding</keyword>
<keyword id="KW-0561">Oxygen transport</keyword>
<keyword id="KW-1185">Reference proteome</keyword>
<keyword id="KW-0813">Transport</keyword>
<reference key="1">
    <citation type="journal article" date="2004" name="PLoS Biol.">
        <title>Genomic insights into methanotrophy: the complete genome sequence of Methylococcus capsulatus (Bath).</title>
        <authorList>
            <person name="Ward N.L."/>
            <person name="Larsen O."/>
            <person name="Sakwa J."/>
            <person name="Bruseth L."/>
            <person name="Khouri H.M."/>
            <person name="Durkin A.S."/>
            <person name="Dimitrov G."/>
            <person name="Jiang L."/>
            <person name="Scanlan D."/>
            <person name="Kang K.H."/>
            <person name="Lewis M.R."/>
            <person name="Nelson K.E."/>
            <person name="Methe B.A."/>
            <person name="Wu M."/>
            <person name="Heidelberg J.F."/>
            <person name="Paulsen I.T."/>
            <person name="Fouts D.E."/>
            <person name="Ravel J."/>
            <person name="Tettelin H."/>
            <person name="Ren Q."/>
            <person name="Read T.D."/>
            <person name="DeBoy R.T."/>
            <person name="Seshadri R."/>
            <person name="Salzberg S.L."/>
            <person name="Jensen H.B."/>
            <person name="Birkeland N.K."/>
            <person name="Nelson W.C."/>
            <person name="Dodson R.J."/>
            <person name="Grindhaug S.H."/>
            <person name="Holt I.E."/>
            <person name="Eidhammer I."/>
            <person name="Jonasen I."/>
            <person name="Vanaken S."/>
            <person name="Utterback T.R."/>
            <person name="Feldblyum T.V."/>
            <person name="Fraser C.M."/>
            <person name="Lillehaug J.R."/>
            <person name="Eisen J.A."/>
        </authorList>
    </citation>
    <scope>NUCLEOTIDE SEQUENCE [LARGE SCALE GENOMIC DNA]</scope>
    <source>
        <strain>ATCC 33009 / NCIMB 11132 / Bath</strain>
    </source>
</reference>
<reference key="2">
    <citation type="journal article" date="2005" name="FEBS J.">
        <title>Characterization of a prokaryotic haemerythrin from the methanotrophic bacterium Methylococcus capsulatus (Bath).</title>
        <authorList>
            <person name="Karlsen O.A."/>
            <person name="Ramsevik L."/>
            <person name="Bruseth L.J."/>
            <person name="Larsen O."/>
            <person name="Brenner A."/>
            <person name="Berven F.S."/>
            <person name="Jensen H.B."/>
            <person name="Lillehaug J.R."/>
        </authorList>
    </citation>
    <scope>FUNCTION</scope>
    <scope>SUBUNIT</scope>
    <scope>IRON-BINDING</scope>
    <scope>IDENTIFICATION BY MASS SPECTROMETRY</scope>
</reference>
<reference key="3">
    <citation type="journal article" date="2008" name="J. Inorg. Biochem.">
        <title>Isolation, purification and characterization of hemerythrin from Methylococcus capsulatus (Bath).</title>
        <authorList>
            <person name="Kao W.C."/>
            <person name="Wang V.C."/>
            <person name="Huang Y.C."/>
            <person name="Yu S.S."/>
            <person name="Chang T.C."/>
            <person name="Chan S.I."/>
        </authorList>
    </citation>
    <scope>SUBUNIT</scope>
</reference>
<gene>
    <name type="ordered locus">MCA0715</name>
</gene>
<sequence length="131" mass="14715">MALMTWTAAEFGTNVGFADDQHKTIFDMVNKLHDTAATGNRSEIGKQLDALIDYVVMHFKSEETEMQKKGYADFAAHKAEHDKLVGVCADLQKKFHAGEAEVNQDTTRFVRDWLVNHIPKVDKLYGPCLSA</sequence>
<accession>Q60AX2</accession>
<organism>
    <name type="scientific">Methylococcus capsulatus (strain ATCC 33009 / NCIMB 11132 / Bath)</name>
    <dbReference type="NCBI Taxonomy" id="243233"/>
    <lineage>
        <taxon>Bacteria</taxon>
        <taxon>Pseudomonadati</taxon>
        <taxon>Pseudomonadota</taxon>
        <taxon>Gammaproteobacteria</taxon>
        <taxon>Methylococcales</taxon>
        <taxon>Methylococcaceae</taxon>
        <taxon>Methylococcus</taxon>
    </lineage>
</organism>